<dbReference type="EMBL" id="GU292947">
    <property type="protein sequence ID" value="ADB56763.1"/>
    <property type="molecule type" value="mRNA"/>
</dbReference>
<dbReference type="ArachnoServer" id="AS001592">
    <property type="toxin name" value="U11-theraphotoxin-Hhn1a"/>
</dbReference>
<dbReference type="GO" id="GO:0005576">
    <property type="term" value="C:extracellular region"/>
    <property type="evidence" value="ECO:0007669"/>
    <property type="project" value="UniProtKB-SubCell"/>
</dbReference>
<dbReference type="GO" id="GO:0019871">
    <property type="term" value="F:sodium channel inhibitor activity"/>
    <property type="evidence" value="ECO:0007669"/>
    <property type="project" value="InterPro"/>
</dbReference>
<dbReference type="GO" id="GO:0090729">
    <property type="term" value="F:toxin activity"/>
    <property type="evidence" value="ECO:0007669"/>
    <property type="project" value="UniProtKB-KW"/>
</dbReference>
<dbReference type="InterPro" id="IPR012627">
    <property type="entry name" value="Toxin_22"/>
</dbReference>
<dbReference type="Pfam" id="PF08092">
    <property type="entry name" value="Toxin_22"/>
    <property type="match status" value="1"/>
</dbReference>
<protein>
    <recommendedName>
        <fullName>U11-theraphotoxin-Hhn1a</fullName>
        <shortName>U11-TRTX-Hhn1a</shortName>
    </recommendedName>
    <alternativeName>
        <fullName>Hainantoxin-XVI.18</fullName>
        <shortName>HNTX-XVI.18</shortName>
    </alternativeName>
    <alternativeName>
        <fullName>Peptide F4-19.87</fullName>
    </alternativeName>
</protein>
<accession>D2Y270</accession>
<name>H1618_CYRHA</name>
<keyword id="KW-0903">Direct protein sequencing</keyword>
<keyword id="KW-1015">Disulfide bond</keyword>
<keyword id="KW-0872">Ion channel impairing toxin</keyword>
<keyword id="KW-0960">Knottin</keyword>
<keyword id="KW-0964">Secreted</keyword>
<keyword id="KW-0732">Signal</keyword>
<keyword id="KW-0800">Toxin</keyword>
<sequence length="113" mass="13073">MNTVRVTFLLVFVLAVSLGQADKDENRMEMQEKTEQGKSYLDFAENLLLQKLEELEAKLPEEDSEESRNSRQKRCIGEGVPCDENDPRCCSGLVCLKPTLHGIWYKSYYCYKK</sequence>
<comment type="function">
    <text evidence="1">Probable ion channel inhibitor.</text>
</comment>
<comment type="subcellular location">
    <subcellularLocation>
        <location>Secreted</location>
    </subcellularLocation>
</comment>
<comment type="tissue specificity">
    <text>Expressed by the venom gland.</text>
</comment>
<comment type="domain">
    <text evidence="1">The presence of a 'disulfide through disulfide knot' structurally defines this protein as a knottin.</text>
</comment>
<comment type="similarity">
    <text evidence="5">Belongs to the neurotoxin 14 (magi-1) family. 01 (HNTX-16) subfamily.</text>
</comment>
<evidence type="ECO:0000250" key="1"/>
<evidence type="ECO:0000255" key="2"/>
<evidence type="ECO:0000256" key="3">
    <source>
        <dbReference type="SAM" id="MobiDB-lite"/>
    </source>
</evidence>
<evidence type="ECO:0000269" key="4">
    <source>
    </source>
</evidence>
<evidence type="ECO:0000305" key="5"/>
<feature type="signal peptide" evidence="2">
    <location>
        <begin position="1"/>
        <end position="21"/>
    </location>
</feature>
<feature type="propeptide" id="PRO_0000400891" evidence="4">
    <location>
        <begin position="22"/>
        <end position="74"/>
    </location>
</feature>
<feature type="peptide" id="PRO_0000400892" description="U11-theraphotoxin-Hhn1a">
    <location>
        <begin position="75"/>
        <end position="113"/>
    </location>
</feature>
<feature type="region of interest" description="Disordered" evidence="3">
    <location>
        <begin position="58"/>
        <end position="82"/>
    </location>
</feature>
<feature type="compositionally biased region" description="Basic and acidic residues" evidence="3">
    <location>
        <begin position="58"/>
        <end position="69"/>
    </location>
</feature>
<feature type="disulfide bond" evidence="1">
    <location>
        <begin position="75"/>
        <end position="90"/>
    </location>
</feature>
<feature type="disulfide bond" evidence="1">
    <location>
        <begin position="82"/>
        <end position="95"/>
    </location>
</feature>
<feature type="disulfide bond" evidence="1">
    <location>
        <begin position="89"/>
        <end position="110"/>
    </location>
</feature>
<proteinExistence type="evidence at protein level"/>
<organism>
    <name type="scientific">Cyriopagopus hainanus</name>
    <name type="common">Chinese bird spider</name>
    <name type="synonym">Haplopelma hainanum</name>
    <dbReference type="NCBI Taxonomy" id="209901"/>
    <lineage>
        <taxon>Eukaryota</taxon>
        <taxon>Metazoa</taxon>
        <taxon>Ecdysozoa</taxon>
        <taxon>Arthropoda</taxon>
        <taxon>Chelicerata</taxon>
        <taxon>Arachnida</taxon>
        <taxon>Araneae</taxon>
        <taxon>Mygalomorphae</taxon>
        <taxon>Theraphosidae</taxon>
        <taxon>Haplopelma</taxon>
    </lineage>
</organism>
<reference key="1">
    <citation type="journal article" date="2010" name="J. Proteome Res.">
        <title>Molecular diversification of peptide toxins from the tarantula Haplopelma hainanum (Ornithoctonus hainana) venom based on transcriptomic, peptidomic, and genomic analyses.</title>
        <authorList>
            <person name="Tang X."/>
            <person name="Zhang Y."/>
            <person name="Hu W."/>
            <person name="Xu D."/>
            <person name="Tao H."/>
            <person name="Yang X."/>
            <person name="Li Y."/>
            <person name="Jiang L."/>
            <person name="Liang S."/>
        </authorList>
    </citation>
    <scope>NUCLEOTIDE SEQUENCE [LARGE SCALE MRNA]</scope>
    <scope>PROTEIN SEQUENCE OF 75-113</scope>
    <scope>IDENTIFICATION BY MASS SPECTROMETRY</scope>
    <source>
        <tissue>Venom</tissue>
        <tissue>Venom gland</tissue>
    </source>
</reference>